<comment type="function">
    <text evidence="1">Major role in the synthesis of nucleoside triphosphates other than ATP. The ATP gamma phosphate is transferred to the NDP beta phosphate via a ping-pong mechanism, using a phosphorylated active-site intermediate.</text>
</comment>
<comment type="catalytic activity">
    <reaction evidence="1">
        <text>a 2'-deoxyribonucleoside 5'-diphosphate + ATP = a 2'-deoxyribonucleoside 5'-triphosphate + ADP</text>
        <dbReference type="Rhea" id="RHEA:44640"/>
        <dbReference type="ChEBI" id="CHEBI:30616"/>
        <dbReference type="ChEBI" id="CHEBI:61560"/>
        <dbReference type="ChEBI" id="CHEBI:73316"/>
        <dbReference type="ChEBI" id="CHEBI:456216"/>
        <dbReference type="EC" id="2.7.4.6"/>
    </reaction>
</comment>
<comment type="catalytic activity">
    <reaction evidence="1">
        <text>a ribonucleoside 5'-diphosphate + ATP = a ribonucleoside 5'-triphosphate + ADP</text>
        <dbReference type="Rhea" id="RHEA:18113"/>
        <dbReference type="ChEBI" id="CHEBI:30616"/>
        <dbReference type="ChEBI" id="CHEBI:57930"/>
        <dbReference type="ChEBI" id="CHEBI:61557"/>
        <dbReference type="ChEBI" id="CHEBI:456216"/>
        <dbReference type="EC" id="2.7.4.6"/>
    </reaction>
</comment>
<comment type="cofactor">
    <cofactor evidence="1">
        <name>Mg(2+)</name>
        <dbReference type="ChEBI" id="CHEBI:18420"/>
    </cofactor>
</comment>
<comment type="subunit">
    <text evidence="1">Homotetramer.</text>
</comment>
<comment type="subcellular location">
    <subcellularLocation>
        <location evidence="1">Cytoplasm</location>
    </subcellularLocation>
</comment>
<comment type="similarity">
    <text evidence="1">Belongs to the NDK family.</text>
</comment>
<name>NDK_ESCF3</name>
<dbReference type="EC" id="2.7.4.6" evidence="1"/>
<dbReference type="EMBL" id="CU928158">
    <property type="protein sequence ID" value="CAQ88197.1"/>
    <property type="molecule type" value="Genomic_DNA"/>
</dbReference>
<dbReference type="RefSeq" id="WP_000963837.1">
    <property type="nucleotide sequence ID" value="NC_011740.1"/>
</dbReference>
<dbReference type="SMR" id="B7LKC0"/>
<dbReference type="GeneID" id="93774618"/>
<dbReference type="KEGG" id="efe:EFER_0654"/>
<dbReference type="HOGENOM" id="CLU_060216_8_1_6"/>
<dbReference type="OrthoDB" id="9801161at2"/>
<dbReference type="Proteomes" id="UP000000745">
    <property type="component" value="Chromosome"/>
</dbReference>
<dbReference type="GO" id="GO:0005737">
    <property type="term" value="C:cytoplasm"/>
    <property type="evidence" value="ECO:0007669"/>
    <property type="project" value="UniProtKB-SubCell"/>
</dbReference>
<dbReference type="GO" id="GO:0005524">
    <property type="term" value="F:ATP binding"/>
    <property type="evidence" value="ECO:0007669"/>
    <property type="project" value="UniProtKB-UniRule"/>
</dbReference>
<dbReference type="GO" id="GO:0046872">
    <property type="term" value="F:metal ion binding"/>
    <property type="evidence" value="ECO:0007669"/>
    <property type="project" value="UniProtKB-KW"/>
</dbReference>
<dbReference type="GO" id="GO:0004550">
    <property type="term" value="F:nucleoside diphosphate kinase activity"/>
    <property type="evidence" value="ECO:0007669"/>
    <property type="project" value="UniProtKB-UniRule"/>
</dbReference>
<dbReference type="GO" id="GO:0006241">
    <property type="term" value="P:CTP biosynthetic process"/>
    <property type="evidence" value="ECO:0007669"/>
    <property type="project" value="UniProtKB-UniRule"/>
</dbReference>
<dbReference type="GO" id="GO:0006183">
    <property type="term" value="P:GTP biosynthetic process"/>
    <property type="evidence" value="ECO:0007669"/>
    <property type="project" value="UniProtKB-UniRule"/>
</dbReference>
<dbReference type="GO" id="GO:0006228">
    <property type="term" value="P:UTP biosynthetic process"/>
    <property type="evidence" value="ECO:0007669"/>
    <property type="project" value="UniProtKB-UniRule"/>
</dbReference>
<dbReference type="CDD" id="cd04413">
    <property type="entry name" value="NDPk_I"/>
    <property type="match status" value="1"/>
</dbReference>
<dbReference type="FunFam" id="3.30.70.141:FF:000001">
    <property type="entry name" value="Nucleoside diphosphate kinase"/>
    <property type="match status" value="1"/>
</dbReference>
<dbReference type="Gene3D" id="3.30.70.141">
    <property type="entry name" value="Nucleoside diphosphate kinase-like domain"/>
    <property type="match status" value="1"/>
</dbReference>
<dbReference type="HAMAP" id="MF_00451">
    <property type="entry name" value="NDP_kinase"/>
    <property type="match status" value="1"/>
</dbReference>
<dbReference type="InterPro" id="IPR034907">
    <property type="entry name" value="NDK-like_dom"/>
</dbReference>
<dbReference type="InterPro" id="IPR036850">
    <property type="entry name" value="NDK-like_dom_sf"/>
</dbReference>
<dbReference type="InterPro" id="IPR001564">
    <property type="entry name" value="Nucleoside_diP_kinase"/>
</dbReference>
<dbReference type="InterPro" id="IPR023005">
    <property type="entry name" value="Nucleoside_diP_kinase_AS"/>
</dbReference>
<dbReference type="NCBIfam" id="NF001908">
    <property type="entry name" value="PRK00668.1"/>
    <property type="match status" value="1"/>
</dbReference>
<dbReference type="PANTHER" id="PTHR46161">
    <property type="entry name" value="NUCLEOSIDE DIPHOSPHATE KINASE"/>
    <property type="match status" value="1"/>
</dbReference>
<dbReference type="PANTHER" id="PTHR46161:SF3">
    <property type="entry name" value="NUCLEOSIDE DIPHOSPHATE KINASE DDB_G0292928-RELATED"/>
    <property type="match status" value="1"/>
</dbReference>
<dbReference type="Pfam" id="PF00334">
    <property type="entry name" value="NDK"/>
    <property type="match status" value="1"/>
</dbReference>
<dbReference type="PRINTS" id="PR01243">
    <property type="entry name" value="NUCDPKINASE"/>
</dbReference>
<dbReference type="SMART" id="SM00562">
    <property type="entry name" value="NDK"/>
    <property type="match status" value="1"/>
</dbReference>
<dbReference type="SUPFAM" id="SSF54919">
    <property type="entry name" value="Nucleoside diphosphate kinase, NDK"/>
    <property type="match status" value="1"/>
</dbReference>
<dbReference type="PROSITE" id="PS00469">
    <property type="entry name" value="NDPK"/>
    <property type="match status" value="1"/>
</dbReference>
<dbReference type="PROSITE" id="PS51374">
    <property type="entry name" value="NDPK_LIKE"/>
    <property type="match status" value="1"/>
</dbReference>
<evidence type="ECO:0000255" key="1">
    <source>
        <dbReference type="HAMAP-Rule" id="MF_00451"/>
    </source>
</evidence>
<keyword id="KW-0067">ATP-binding</keyword>
<keyword id="KW-0963">Cytoplasm</keyword>
<keyword id="KW-0418">Kinase</keyword>
<keyword id="KW-0460">Magnesium</keyword>
<keyword id="KW-0479">Metal-binding</keyword>
<keyword id="KW-0546">Nucleotide metabolism</keyword>
<keyword id="KW-0547">Nucleotide-binding</keyword>
<keyword id="KW-0597">Phosphoprotein</keyword>
<keyword id="KW-0808">Transferase</keyword>
<proteinExistence type="inferred from homology"/>
<feature type="chain" id="PRO_1000124965" description="Nucleoside diphosphate kinase">
    <location>
        <begin position="1"/>
        <end position="143"/>
    </location>
</feature>
<feature type="active site" description="Pros-phosphohistidine intermediate" evidence="1">
    <location>
        <position position="117"/>
    </location>
</feature>
<feature type="binding site" evidence="1">
    <location>
        <position position="11"/>
    </location>
    <ligand>
        <name>ATP</name>
        <dbReference type="ChEBI" id="CHEBI:30616"/>
    </ligand>
</feature>
<feature type="binding site" evidence="1">
    <location>
        <position position="59"/>
    </location>
    <ligand>
        <name>ATP</name>
        <dbReference type="ChEBI" id="CHEBI:30616"/>
    </ligand>
</feature>
<feature type="binding site" evidence="1">
    <location>
        <position position="87"/>
    </location>
    <ligand>
        <name>ATP</name>
        <dbReference type="ChEBI" id="CHEBI:30616"/>
    </ligand>
</feature>
<feature type="binding site" evidence="1">
    <location>
        <position position="93"/>
    </location>
    <ligand>
        <name>ATP</name>
        <dbReference type="ChEBI" id="CHEBI:30616"/>
    </ligand>
</feature>
<feature type="binding site" evidence="1">
    <location>
        <position position="104"/>
    </location>
    <ligand>
        <name>ATP</name>
        <dbReference type="ChEBI" id="CHEBI:30616"/>
    </ligand>
</feature>
<feature type="binding site" evidence="1">
    <location>
        <position position="114"/>
    </location>
    <ligand>
        <name>ATP</name>
        <dbReference type="ChEBI" id="CHEBI:30616"/>
    </ligand>
</feature>
<reference key="1">
    <citation type="journal article" date="2009" name="PLoS Genet.">
        <title>Organised genome dynamics in the Escherichia coli species results in highly diverse adaptive paths.</title>
        <authorList>
            <person name="Touchon M."/>
            <person name="Hoede C."/>
            <person name="Tenaillon O."/>
            <person name="Barbe V."/>
            <person name="Baeriswyl S."/>
            <person name="Bidet P."/>
            <person name="Bingen E."/>
            <person name="Bonacorsi S."/>
            <person name="Bouchier C."/>
            <person name="Bouvet O."/>
            <person name="Calteau A."/>
            <person name="Chiapello H."/>
            <person name="Clermont O."/>
            <person name="Cruveiller S."/>
            <person name="Danchin A."/>
            <person name="Diard M."/>
            <person name="Dossat C."/>
            <person name="Karoui M.E."/>
            <person name="Frapy E."/>
            <person name="Garry L."/>
            <person name="Ghigo J.M."/>
            <person name="Gilles A.M."/>
            <person name="Johnson J."/>
            <person name="Le Bouguenec C."/>
            <person name="Lescat M."/>
            <person name="Mangenot S."/>
            <person name="Martinez-Jehanne V."/>
            <person name="Matic I."/>
            <person name="Nassif X."/>
            <person name="Oztas S."/>
            <person name="Petit M.A."/>
            <person name="Pichon C."/>
            <person name="Rouy Z."/>
            <person name="Ruf C.S."/>
            <person name="Schneider D."/>
            <person name="Tourret J."/>
            <person name="Vacherie B."/>
            <person name="Vallenet D."/>
            <person name="Medigue C."/>
            <person name="Rocha E.P.C."/>
            <person name="Denamur E."/>
        </authorList>
    </citation>
    <scope>NUCLEOTIDE SEQUENCE [LARGE SCALE GENOMIC DNA]</scope>
    <source>
        <strain>ATCC 35469 / DSM 13698 / BCRC 15582 / CCUG 18766 / IAM 14443 / JCM 21226 / LMG 7866 / NBRC 102419 / NCTC 12128 / CDC 0568-73</strain>
    </source>
</reference>
<protein>
    <recommendedName>
        <fullName evidence="1">Nucleoside diphosphate kinase</fullName>
        <shortName evidence="1">NDK</shortName>
        <shortName evidence="1">NDP kinase</shortName>
        <ecNumber evidence="1">2.7.4.6</ecNumber>
    </recommendedName>
    <alternativeName>
        <fullName evidence="1">Nucleoside-2-P kinase</fullName>
    </alternativeName>
</protein>
<sequence length="143" mass="15463">MAIERTFSIIKPNAVAKNVIGNIFARFEAAGFKIVGTKMLHLTVEQARGFYAEHDGKPFFDGLVEFMTSGPIVVSVLEGENAVQRHRDLLGATNPANALAGTLRADYADSLTENGTHGSDSVESAAREIAYFFGEGEVCPRTR</sequence>
<gene>
    <name evidence="1" type="primary">ndk</name>
    <name type="ordered locus">EFER_0654</name>
</gene>
<organism>
    <name type="scientific">Escherichia fergusonii (strain ATCC 35469 / DSM 13698 / CCUG 18766 / IAM 14443 / JCM 21226 / LMG 7866 / NBRC 102419 / NCTC 12128 / CDC 0568-73)</name>
    <dbReference type="NCBI Taxonomy" id="585054"/>
    <lineage>
        <taxon>Bacteria</taxon>
        <taxon>Pseudomonadati</taxon>
        <taxon>Pseudomonadota</taxon>
        <taxon>Gammaproteobacteria</taxon>
        <taxon>Enterobacterales</taxon>
        <taxon>Enterobacteriaceae</taxon>
        <taxon>Escherichia</taxon>
    </lineage>
</organism>
<accession>B7LKC0</accession>